<dbReference type="EMBL" id="X03431">
    <property type="protein sequence ID" value="CAA27159.1"/>
    <property type="molecule type" value="Genomic_DNA"/>
</dbReference>
<dbReference type="PIR" id="A24872">
    <property type="entry name" value="A24872"/>
</dbReference>
<dbReference type="PeptideAtlas" id="P20828"/>
<dbReference type="FlyBase" id="FBgn0044338">
    <property type="gene designation" value="297\gag"/>
</dbReference>
<dbReference type="PRO" id="PR:P20828"/>
<proteinExistence type="predicted"/>
<comment type="subcellular location">
    <subcellularLocation>
        <location evidence="2">Virion</location>
    </subcellularLocation>
</comment>
<feature type="chain" id="PRO_0000087420" description="Retrovirus-related Gag polyprotein from transposon 297">
    <location>
        <begin position="1"/>
        <end position="414"/>
    </location>
</feature>
<feature type="region of interest" description="Disordered" evidence="1">
    <location>
        <begin position="204"/>
        <end position="235"/>
    </location>
</feature>
<feature type="compositionally biased region" description="Low complexity" evidence="1">
    <location>
        <begin position="206"/>
        <end position="220"/>
    </location>
</feature>
<feature type="compositionally biased region" description="Polar residues" evidence="1">
    <location>
        <begin position="221"/>
        <end position="235"/>
    </location>
</feature>
<keyword id="KW-0814">Transposable element</keyword>
<keyword id="KW-0946">Virion</keyword>
<accession>P20828</accession>
<evidence type="ECO:0000256" key="1">
    <source>
        <dbReference type="SAM" id="MobiDB-lite"/>
    </source>
</evidence>
<evidence type="ECO:0000305" key="2"/>
<organism>
    <name type="scientific">Drosophila melanogaster</name>
    <name type="common">Fruit fly</name>
    <dbReference type="NCBI Taxonomy" id="7227"/>
    <lineage>
        <taxon>Eukaryota</taxon>
        <taxon>Metazoa</taxon>
        <taxon>Ecdysozoa</taxon>
        <taxon>Arthropoda</taxon>
        <taxon>Hexapoda</taxon>
        <taxon>Insecta</taxon>
        <taxon>Pterygota</taxon>
        <taxon>Neoptera</taxon>
        <taxon>Endopterygota</taxon>
        <taxon>Diptera</taxon>
        <taxon>Brachycera</taxon>
        <taxon>Muscomorpha</taxon>
        <taxon>Ephydroidea</taxon>
        <taxon>Drosophilidae</taxon>
        <taxon>Drosophila</taxon>
        <taxon>Sophophora</taxon>
    </lineage>
</organism>
<name>GAG2_DROME</name>
<protein>
    <recommendedName>
        <fullName>Retrovirus-related Gag polyprotein from transposon 297</fullName>
    </recommendedName>
</protein>
<sequence>MSQPIIALSDINLAEARRQLKDIMPFKGDPETLHTFISRVDYVISLYQTNDVRQQRILLGAIERNLDGQITRSLGLPNVEDWPTLKARLIAEFKIQTPNYKLLENFRETPYRGSLRAFCEEAERRRQLLISKLHLEGNQSDFLIYIQGIKESIKILIRKLPIQLFTILAHHDITDLRSLITIAQNEGIYEEHINFEFYEKPEYRNKNSNSNQNSKTQKFNTNVQTQNRPSYSQYSQPFQPNFNQYIQPFRPSYTQQITNNPPMWHAPNYFRPNQYINPQPIIQKNHFQQYPNKAQFPQTTHFRGNTYPRLQQPSTYKNTNFPITKRLRPSDSEQTKMSIDEIRFQDAHEFEQVQPNYYEQQYFNQNQYNPYQNHSFINEGQQQVQFVQINNKQNQNNSELNENFRLTVPENTNT</sequence>
<reference key="1">
    <citation type="journal article" date="1986" name="Eur. J. Biochem.">
        <title>Complete nucleotide sequence and genome organization of a Drosophila transposable genetic element, 297.</title>
        <authorList>
            <person name="Inouye S."/>
            <person name="Yuki S."/>
            <person name="Saigo K."/>
        </authorList>
    </citation>
    <scope>NUCLEOTIDE SEQUENCE [GENOMIC DNA]</scope>
</reference>
<gene>
    <name type="primary">gag</name>
</gene>